<dbReference type="EC" id="2.3.2.27" evidence="4"/>
<dbReference type="EMBL" id="DQ059117">
    <property type="protein sequence ID" value="AAY57603.1"/>
    <property type="molecule type" value="mRNA"/>
</dbReference>
<dbReference type="EMBL" id="AC005359">
    <property type="status" value="NOT_ANNOTATED_CDS"/>
    <property type="molecule type" value="Genomic_DNA"/>
</dbReference>
<dbReference type="EMBL" id="AL161514">
    <property type="protein sequence ID" value="CAB78034.1"/>
    <property type="molecule type" value="Genomic_DNA"/>
</dbReference>
<dbReference type="EMBL" id="CP002687">
    <property type="protein sequence ID" value="AEE82722.1"/>
    <property type="molecule type" value="Genomic_DNA"/>
</dbReference>
<dbReference type="EMBL" id="BT024815">
    <property type="protein sequence ID" value="ABD60698.1"/>
    <property type="molecule type" value="mRNA"/>
</dbReference>
<dbReference type="PIR" id="B85092">
    <property type="entry name" value="B85092"/>
</dbReference>
<dbReference type="RefSeq" id="NP_192649.1">
    <property type="nucleotide sequence ID" value="NM_116979.3"/>
</dbReference>
<dbReference type="SMR" id="Q9M0R7"/>
<dbReference type="BioGRID" id="11787">
    <property type="interactions" value="5"/>
</dbReference>
<dbReference type="FunCoup" id="Q9M0R7">
    <property type="interactions" value="940"/>
</dbReference>
<dbReference type="IntAct" id="Q9M0R7">
    <property type="interactions" value="5"/>
</dbReference>
<dbReference type="PaxDb" id="3702-AT4G09100.1"/>
<dbReference type="EnsemblPlants" id="AT4G09100.1">
    <property type="protein sequence ID" value="AT4G09100.1"/>
    <property type="gene ID" value="AT4G09100"/>
</dbReference>
<dbReference type="GeneID" id="826488"/>
<dbReference type="Gramene" id="AT4G09100.1">
    <property type="protein sequence ID" value="AT4G09100.1"/>
    <property type="gene ID" value="AT4G09100"/>
</dbReference>
<dbReference type="KEGG" id="ath:AT4G09100"/>
<dbReference type="Araport" id="AT4G09100"/>
<dbReference type="TAIR" id="AT4G09100">
    <property type="gene designation" value="ATL39"/>
</dbReference>
<dbReference type="eggNOG" id="KOG0800">
    <property type="taxonomic scope" value="Eukaryota"/>
</dbReference>
<dbReference type="HOGENOM" id="CLU_013137_15_10_1"/>
<dbReference type="InParanoid" id="Q9M0R7"/>
<dbReference type="OMA" id="NYYIRRC"/>
<dbReference type="PhylomeDB" id="Q9M0R7"/>
<dbReference type="UniPathway" id="UPA00143"/>
<dbReference type="PRO" id="PR:Q9M0R7"/>
<dbReference type="Proteomes" id="UP000006548">
    <property type="component" value="Chromosome 4"/>
</dbReference>
<dbReference type="ExpressionAtlas" id="Q9M0R7">
    <property type="expression patterns" value="baseline and differential"/>
</dbReference>
<dbReference type="GO" id="GO:0016020">
    <property type="term" value="C:membrane"/>
    <property type="evidence" value="ECO:0007669"/>
    <property type="project" value="UniProtKB-SubCell"/>
</dbReference>
<dbReference type="GO" id="GO:0016740">
    <property type="term" value="F:transferase activity"/>
    <property type="evidence" value="ECO:0007669"/>
    <property type="project" value="UniProtKB-KW"/>
</dbReference>
<dbReference type="GO" id="GO:0008270">
    <property type="term" value="F:zinc ion binding"/>
    <property type="evidence" value="ECO:0007669"/>
    <property type="project" value="UniProtKB-KW"/>
</dbReference>
<dbReference type="GO" id="GO:0016567">
    <property type="term" value="P:protein ubiquitination"/>
    <property type="evidence" value="ECO:0007669"/>
    <property type="project" value="UniProtKB-UniPathway"/>
</dbReference>
<dbReference type="CDD" id="cd16461">
    <property type="entry name" value="RING-H2_EL5-like"/>
    <property type="match status" value="1"/>
</dbReference>
<dbReference type="FunFam" id="3.30.40.10:FF:000187">
    <property type="entry name" value="E3 ubiquitin-protein ligase ATL6"/>
    <property type="match status" value="1"/>
</dbReference>
<dbReference type="Gene3D" id="3.30.40.10">
    <property type="entry name" value="Zinc/RING finger domain, C3HC4 (zinc finger)"/>
    <property type="match status" value="1"/>
</dbReference>
<dbReference type="InterPro" id="IPR053238">
    <property type="entry name" value="RING-H2_zinc_finger"/>
</dbReference>
<dbReference type="InterPro" id="IPR001841">
    <property type="entry name" value="Znf_RING"/>
</dbReference>
<dbReference type="InterPro" id="IPR011016">
    <property type="entry name" value="Znf_RING-CH"/>
</dbReference>
<dbReference type="InterPro" id="IPR013083">
    <property type="entry name" value="Znf_RING/FYVE/PHD"/>
</dbReference>
<dbReference type="PANTHER" id="PTHR14155">
    <property type="entry name" value="RING FINGER DOMAIN-CONTAINING"/>
    <property type="match status" value="1"/>
</dbReference>
<dbReference type="PANTHER" id="PTHR14155:SF530">
    <property type="entry name" value="RING-H2 FINGER PROTEIN ATL39"/>
    <property type="match status" value="1"/>
</dbReference>
<dbReference type="Pfam" id="PF13639">
    <property type="entry name" value="zf-RING_2"/>
    <property type="match status" value="1"/>
</dbReference>
<dbReference type="SMART" id="SM00184">
    <property type="entry name" value="RING"/>
    <property type="match status" value="1"/>
</dbReference>
<dbReference type="SMART" id="SM00744">
    <property type="entry name" value="RINGv"/>
    <property type="match status" value="1"/>
</dbReference>
<dbReference type="SUPFAM" id="SSF57850">
    <property type="entry name" value="RING/U-box"/>
    <property type="match status" value="1"/>
</dbReference>
<dbReference type="PROSITE" id="PS50089">
    <property type="entry name" value="ZF_RING_2"/>
    <property type="match status" value="1"/>
</dbReference>
<reference key="1">
    <citation type="journal article" date="2005" name="Plant Physiol.">
        <title>Functional analysis of the RING-type ubiquitin ligase family of Arabidopsis.</title>
        <authorList>
            <person name="Stone S.L."/>
            <person name="Hauksdottir H."/>
            <person name="Troy A."/>
            <person name="Herschleb J."/>
            <person name="Kraft E."/>
            <person name="Callis J."/>
        </authorList>
    </citation>
    <scope>NUCLEOTIDE SEQUENCE [MRNA]</scope>
    <source>
        <strain>cv. Columbia</strain>
        <tissue>Leaf</tissue>
    </source>
</reference>
<reference key="2">
    <citation type="journal article" date="1999" name="Nature">
        <title>Sequence and analysis of chromosome 4 of the plant Arabidopsis thaliana.</title>
        <authorList>
            <person name="Mayer K.F.X."/>
            <person name="Schueller C."/>
            <person name="Wambutt R."/>
            <person name="Murphy G."/>
            <person name="Volckaert G."/>
            <person name="Pohl T."/>
            <person name="Duesterhoeft A."/>
            <person name="Stiekema W."/>
            <person name="Entian K.-D."/>
            <person name="Terryn N."/>
            <person name="Harris B."/>
            <person name="Ansorge W."/>
            <person name="Brandt P."/>
            <person name="Grivell L.A."/>
            <person name="Rieger M."/>
            <person name="Weichselgartner M."/>
            <person name="de Simone V."/>
            <person name="Obermaier B."/>
            <person name="Mache R."/>
            <person name="Mueller M."/>
            <person name="Kreis M."/>
            <person name="Delseny M."/>
            <person name="Puigdomenech P."/>
            <person name="Watson M."/>
            <person name="Schmidtheini T."/>
            <person name="Reichert B."/>
            <person name="Portetelle D."/>
            <person name="Perez-Alonso M."/>
            <person name="Boutry M."/>
            <person name="Bancroft I."/>
            <person name="Vos P."/>
            <person name="Hoheisel J."/>
            <person name="Zimmermann W."/>
            <person name="Wedler H."/>
            <person name="Ridley P."/>
            <person name="Langham S.-A."/>
            <person name="McCullagh B."/>
            <person name="Bilham L."/>
            <person name="Robben J."/>
            <person name="van der Schueren J."/>
            <person name="Grymonprez B."/>
            <person name="Chuang Y.-J."/>
            <person name="Vandenbussche F."/>
            <person name="Braeken M."/>
            <person name="Weltjens I."/>
            <person name="Voet M."/>
            <person name="Bastiaens I."/>
            <person name="Aert R."/>
            <person name="Defoor E."/>
            <person name="Weitzenegger T."/>
            <person name="Bothe G."/>
            <person name="Ramsperger U."/>
            <person name="Hilbert H."/>
            <person name="Braun M."/>
            <person name="Holzer E."/>
            <person name="Brandt A."/>
            <person name="Peters S."/>
            <person name="van Staveren M."/>
            <person name="Dirkse W."/>
            <person name="Mooijman P."/>
            <person name="Klein Lankhorst R."/>
            <person name="Rose M."/>
            <person name="Hauf J."/>
            <person name="Koetter P."/>
            <person name="Berneiser S."/>
            <person name="Hempel S."/>
            <person name="Feldpausch M."/>
            <person name="Lamberth S."/>
            <person name="Van den Daele H."/>
            <person name="De Keyser A."/>
            <person name="Buysshaert C."/>
            <person name="Gielen J."/>
            <person name="Villarroel R."/>
            <person name="De Clercq R."/>
            <person name="van Montagu M."/>
            <person name="Rogers J."/>
            <person name="Cronin A."/>
            <person name="Quail M.A."/>
            <person name="Bray-Allen S."/>
            <person name="Clark L."/>
            <person name="Doggett J."/>
            <person name="Hall S."/>
            <person name="Kay M."/>
            <person name="Lennard N."/>
            <person name="McLay K."/>
            <person name="Mayes R."/>
            <person name="Pettett A."/>
            <person name="Rajandream M.A."/>
            <person name="Lyne M."/>
            <person name="Benes V."/>
            <person name="Rechmann S."/>
            <person name="Borkova D."/>
            <person name="Bloecker H."/>
            <person name="Scharfe M."/>
            <person name="Grimm M."/>
            <person name="Loehnert T.-H."/>
            <person name="Dose S."/>
            <person name="de Haan M."/>
            <person name="Maarse A.C."/>
            <person name="Schaefer M."/>
            <person name="Mueller-Auer S."/>
            <person name="Gabel C."/>
            <person name="Fuchs M."/>
            <person name="Fartmann B."/>
            <person name="Granderath K."/>
            <person name="Dauner D."/>
            <person name="Herzl A."/>
            <person name="Neumann S."/>
            <person name="Argiriou A."/>
            <person name="Vitale D."/>
            <person name="Liguori R."/>
            <person name="Piravandi E."/>
            <person name="Massenet O."/>
            <person name="Quigley F."/>
            <person name="Clabauld G."/>
            <person name="Muendlein A."/>
            <person name="Felber R."/>
            <person name="Schnabl S."/>
            <person name="Hiller R."/>
            <person name="Schmidt W."/>
            <person name="Lecharny A."/>
            <person name="Aubourg S."/>
            <person name="Chefdor F."/>
            <person name="Cooke R."/>
            <person name="Berger C."/>
            <person name="Monfort A."/>
            <person name="Casacuberta E."/>
            <person name="Gibbons T."/>
            <person name="Weber N."/>
            <person name="Vandenbol M."/>
            <person name="Bargues M."/>
            <person name="Terol J."/>
            <person name="Torres A."/>
            <person name="Perez-Perez A."/>
            <person name="Purnelle B."/>
            <person name="Bent E."/>
            <person name="Johnson S."/>
            <person name="Tacon D."/>
            <person name="Jesse T."/>
            <person name="Heijnen L."/>
            <person name="Schwarz S."/>
            <person name="Scholler P."/>
            <person name="Heber S."/>
            <person name="Francs P."/>
            <person name="Bielke C."/>
            <person name="Frishman D."/>
            <person name="Haase D."/>
            <person name="Lemcke K."/>
            <person name="Mewes H.-W."/>
            <person name="Stocker S."/>
            <person name="Zaccaria P."/>
            <person name="Bevan M."/>
            <person name="Wilson R.K."/>
            <person name="de la Bastide M."/>
            <person name="Habermann K."/>
            <person name="Parnell L."/>
            <person name="Dedhia N."/>
            <person name="Gnoj L."/>
            <person name="Schutz K."/>
            <person name="Huang E."/>
            <person name="Spiegel L."/>
            <person name="Sekhon M."/>
            <person name="Murray J."/>
            <person name="Sheet P."/>
            <person name="Cordes M."/>
            <person name="Abu-Threideh J."/>
            <person name="Stoneking T."/>
            <person name="Kalicki J."/>
            <person name="Graves T."/>
            <person name="Harmon G."/>
            <person name="Edwards J."/>
            <person name="Latreille P."/>
            <person name="Courtney L."/>
            <person name="Cloud J."/>
            <person name="Abbott A."/>
            <person name="Scott K."/>
            <person name="Johnson D."/>
            <person name="Minx P."/>
            <person name="Bentley D."/>
            <person name="Fulton B."/>
            <person name="Miller N."/>
            <person name="Greco T."/>
            <person name="Kemp K."/>
            <person name="Kramer J."/>
            <person name="Fulton L."/>
            <person name="Mardis E."/>
            <person name="Dante M."/>
            <person name="Pepin K."/>
            <person name="Hillier L.W."/>
            <person name="Nelson J."/>
            <person name="Spieth J."/>
            <person name="Ryan E."/>
            <person name="Andrews S."/>
            <person name="Geisel C."/>
            <person name="Layman D."/>
            <person name="Du H."/>
            <person name="Ali J."/>
            <person name="Berghoff A."/>
            <person name="Jones K."/>
            <person name="Drone K."/>
            <person name="Cotton M."/>
            <person name="Joshu C."/>
            <person name="Antonoiu B."/>
            <person name="Zidanic M."/>
            <person name="Strong C."/>
            <person name="Sun H."/>
            <person name="Lamar B."/>
            <person name="Yordan C."/>
            <person name="Ma P."/>
            <person name="Zhong J."/>
            <person name="Preston R."/>
            <person name="Vil D."/>
            <person name="Shekher M."/>
            <person name="Matero A."/>
            <person name="Shah R."/>
            <person name="Swaby I.K."/>
            <person name="O'Shaughnessy A."/>
            <person name="Rodriguez M."/>
            <person name="Hoffman J."/>
            <person name="Till S."/>
            <person name="Granat S."/>
            <person name="Shohdy N."/>
            <person name="Hasegawa A."/>
            <person name="Hameed A."/>
            <person name="Lodhi M."/>
            <person name="Johnson A."/>
            <person name="Chen E."/>
            <person name="Marra M.A."/>
            <person name="Martienssen R."/>
            <person name="McCombie W.R."/>
        </authorList>
    </citation>
    <scope>NUCLEOTIDE SEQUENCE [LARGE SCALE GENOMIC DNA]</scope>
    <source>
        <strain>cv. Columbia</strain>
    </source>
</reference>
<reference key="3">
    <citation type="journal article" date="2017" name="Plant J.">
        <title>Araport11: a complete reannotation of the Arabidopsis thaliana reference genome.</title>
        <authorList>
            <person name="Cheng C.Y."/>
            <person name="Krishnakumar V."/>
            <person name="Chan A.P."/>
            <person name="Thibaud-Nissen F."/>
            <person name="Schobel S."/>
            <person name="Town C.D."/>
        </authorList>
    </citation>
    <scope>GENOME REANNOTATION</scope>
    <source>
        <strain>cv. Columbia</strain>
    </source>
</reference>
<reference key="4">
    <citation type="submission" date="2006-03" db="EMBL/GenBank/DDBJ databases">
        <title>Arabidopsis ORF clones.</title>
        <authorList>
            <person name="Kim C.J."/>
            <person name="Chen H."/>
            <person name="Shinn P."/>
            <person name="Ecker J.R."/>
        </authorList>
    </citation>
    <scope>NUCLEOTIDE SEQUENCE [LARGE SCALE MRNA]</scope>
    <source>
        <strain>cv. Columbia</strain>
    </source>
</reference>
<reference key="5">
    <citation type="journal article" date="2002" name="Genome Biol.">
        <title>Evaluation and classification of RING-finger domains encoded by the Arabidopsis genome.</title>
        <authorList>
            <person name="Kosarev P."/>
            <person name="Mayer K.F.X."/>
            <person name="Hardtke C.S."/>
        </authorList>
    </citation>
    <scope>GENE FAMILY ORGANIZATION</scope>
</reference>
<reference key="6">
    <citation type="journal article" date="2006" name="J. Mol. Evol.">
        <title>The ATL gene family from Arabidopsis thaliana and Oryza sativa comprises a large number of putative ubiquitin ligases of the RING-H2 type.</title>
        <authorList>
            <person name="Serrano M."/>
            <person name="Parra S."/>
            <person name="Alcaraz L.D."/>
            <person name="Guzman P."/>
        </authorList>
    </citation>
    <scope>NOMENCLATURE</scope>
    <scope>GENE FAMILY ORGANIZATION</scope>
</reference>
<accession>Q9M0R7</accession>
<accession>Q4TU19</accession>
<evidence type="ECO:0000250" key="1"/>
<evidence type="ECO:0000255" key="2"/>
<evidence type="ECO:0000255" key="3">
    <source>
        <dbReference type="PROSITE-ProRule" id="PRU00175"/>
    </source>
</evidence>
<evidence type="ECO:0000305" key="4"/>
<keyword id="KW-0472">Membrane</keyword>
<keyword id="KW-0479">Metal-binding</keyword>
<keyword id="KW-1185">Reference proteome</keyword>
<keyword id="KW-0808">Transferase</keyword>
<keyword id="KW-0812">Transmembrane</keyword>
<keyword id="KW-1133">Transmembrane helix</keyword>
<keyword id="KW-0833">Ubl conjugation pathway</keyword>
<keyword id="KW-0862">Zinc</keyword>
<keyword id="KW-0863">Zinc-finger</keyword>
<organism>
    <name type="scientific">Arabidopsis thaliana</name>
    <name type="common">Mouse-ear cress</name>
    <dbReference type="NCBI Taxonomy" id="3702"/>
    <lineage>
        <taxon>Eukaryota</taxon>
        <taxon>Viridiplantae</taxon>
        <taxon>Streptophyta</taxon>
        <taxon>Embryophyta</taxon>
        <taxon>Tracheophyta</taxon>
        <taxon>Spermatophyta</taxon>
        <taxon>Magnoliopsida</taxon>
        <taxon>eudicotyledons</taxon>
        <taxon>Gunneridae</taxon>
        <taxon>Pentapetalae</taxon>
        <taxon>rosids</taxon>
        <taxon>malvids</taxon>
        <taxon>Brassicales</taxon>
        <taxon>Brassicaceae</taxon>
        <taxon>Camelineae</taxon>
        <taxon>Arabidopsis</taxon>
    </lineage>
</organism>
<gene>
    <name type="primary">ATL39</name>
    <name type="ordered locus">At4g09100</name>
    <name type="ORF">F23J3.130</name>
    <name type="ORF">T8A17.4</name>
</gene>
<comment type="catalytic activity">
    <reaction evidence="4">
        <text>S-ubiquitinyl-[E2 ubiquitin-conjugating enzyme]-L-cysteine + [acceptor protein]-L-lysine = [E2 ubiquitin-conjugating enzyme]-L-cysteine + N(6)-ubiquitinyl-[acceptor protein]-L-lysine.</text>
        <dbReference type="EC" id="2.3.2.27"/>
    </reaction>
</comment>
<comment type="pathway">
    <text>Protein modification; protein ubiquitination.</text>
</comment>
<comment type="subcellular location">
    <subcellularLocation>
        <location evidence="4">Membrane</location>
        <topology evidence="4">Single-pass membrane protein</topology>
    </subcellularLocation>
</comment>
<comment type="domain">
    <text evidence="1">The RING-type zinc finger domain mediates binding to an E2 ubiquitin-conjugating enzyme.</text>
</comment>
<comment type="similarity">
    <text evidence="4">Belongs to the RING-type zinc finger family. ATL subfamily.</text>
</comment>
<protein>
    <recommendedName>
        <fullName>RING-H2 finger protein ATL39</fullName>
        <ecNumber evidence="4">2.3.2.27</ecNumber>
    </recommendedName>
    <alternativeName>
        <fullName evidence="4">RING-type E3 ubiquitin transferase ATL39</fullName>
    </alternativeName>
</protein>
<sequence>MSYFKRNEGTIVFAFASIGFIAFYIINYYIRRCRNRAAAAGDIEEARMSPRRPPRGLDAEAIKSFPSFVYTEARGIEPGIGELECVVCLNEFKDDETLRLVPPCVHVFHADCVDIWLSHSSTCPICRAKVVP</sequence>
<name>ATL39_ARATH</name>
<feature type="chain" id="PRO_0000055798" description="RING-H2 finger protein ATL39">
    <location>
        <begin position="1"/>
        <end position="132"/>
    </location>
</feature>
<feature type="transmembrane region" description="Helical" evidence="2">
    <location>
        <begin position="10"/>
        <end position="30"/>
    </location>
</feature>
<feature type="zinc finger region" description="RING-type; atypical" evidence="3">
    <location>
        <begin position="85"/>
        <end position="127"/>
    </location>
</feature>
<proteinExistence type="evidence at transcript level"/>